<accession>Q1LSY5</accession>
<proteinExistence type="inferred from homology"/>
<keyword id="KW-0963">Cytoplasm</keyword>
<keyword id="KW-0251">Elongation factor</keyword>
<keyword id="KW-0342">GTP-binding</keyword>
<keyword id="KW-0547">Nucleotide-binding</keyword>
<keyword id="KW-0648">Protein biosynthesis</keyword>
<keyword id="KW-1185">Reference proteome</keyword>
<gene>
    <name evidence="1" type="primary">fusA</name>
    <name type="ordered locus">BCI_0494</name>
</gene>
<dbReference type="EMBL" id="CP000238">
    <property type="protein sequence ID" value="ABF13895.1"/>
    <property type="molecule type" value="Genomic_DNA"/>
</dbReference>
<dbReference type="RefSeq" id="WP_011520662.1">
    <property type="nucleotide sequence ID" value="NC_007984.1"/>
</dbReference>
<dbReference type="SMR" id="Q1LSY5"/>
<dbReference type="STRING" id="374463.BCI_0494"/>
<dbReference type="KEGG" id="bci:BCI_0494"/>
<dbReference type="HOGENOM" id="CLU_002794_4_1_6"/>
<dbReference type="OrthoDB" id="9804431at2"/>
<dbReference type="Proteomes" id="UP000002427">
    <property type="component" value="Chromosome"/>
</dbReference>
<dbReference type="GO" id="GO:0005737">
    <property type="term" value="C:cytoplasm"/>
    <property type="evidence" value="ECO:0007669"/>
    <property type="project" value="UniProtKB-SubCell"/>
</dbReference>
<dbReference type="GO" id="GO:0005525">
    <property type="term" value="F:GTP binding"/>
    <property type="evidence" value="ECO:0007669"/>
    <property type="project" value="UniProtKB-UniRule"/>
</dbReference>
<dbReference type="GO" id="GO:0003924">
    <property type="term" value="F:GTPase activity"/>
    <property type="evidence" value="ECO:0007669"/>
    <property type="project" value="InterPro"/>
</dbReference>
<dbReference type="GO" id="GO:0097216">
    <property type="term" value="F:guanosine tetraphosphate binding"/>
    <property type="evidence" value="ECO:0007669"/>
    <property type="project" value="UniProtKB-ARBA"/>
</dbReference>
<dbReference type="GO" id="GO:0003746">
    <property type="term" value="F:translation elongation factor activity"/>
    <property type="evidence" value="ECO:0007669"/>
    <property type="project" value="UniProtKB-UniRule"/>
</dbReference>
<dbReference type="GO" id="GO:0032790">
    <property type="term" value="P:ribosome disassembly"/>
    <property type="evidence" value="ECO:0007669"/>
    <property type="project" value="TreeGrafter"/>
</dbReference>
<dbReference type="CDD" id="cd01886">
    <property type="entry name" value="EF-G"/>
    <property type="match status" value="1"/>
</dbReference>
<dbReference type="CDD" id="cd16262">
    <property type="entry name" value="EFG_III"/>
    <property type="match status" value="1"/>
</dbReference>
<dbReference type="CDD" id="cd01434">
    <property type="entry name" value="EFG_mtEFG1_IV"/>
    <property type="match status" value="1"/>
</dbReference>
<dbReference type="CDD" id="cd03713">
    <property type="entry name" value="EFG_mtEFG_C"/>
    <property type="match status" value="1"/>
</dbReference>
<dbReference type="CDD" id="cd04088">
    <property type="entry name" value="EFG_mtEFG_II"/>
    <property type="match status" value="1"/>
</dbReference>
<dbReference type="FunFam" id="2.40.30.10:FF:000006">
    <property type="entry name" value="Elongation factor G"/>
    <property type="match status" value="1"/>
</dbReference>
<dbReference type="FunFam" id="3.30.230.10:FF:000003">
    <property type="entry name" value="Elongation factor G"/>
    <property type="match status" value="1"/>
</dbReference>
<dbReference type="FunFam" id="3.30.70.240:FF:000001">
    <property type="entry name" value="Elongation factor G"/>
    <property type="match status" value="1"/>
</dbReference>
<dbReference type="FunFam" id="3.30.70.870:FF:000001">
    <property type="entry name" value="Elongation factor G"/>
    <property type="match status" value="1"/>
</dbReference>
<dbReference type="FunFam" id="3.40.50.300:FF:000029">
    <property type="entry name" value="Elongation factor G"/>
    <property type="match status" value="1"/>
</dbReference>
<dbReference type="Gene3D" id="3.30.230.10">
    <property type="match status" value="1"/>
</dbReference>
<dbReference type="Gene3D" id="3.30.70.240">
    <property type="match status" value="1"/>
</dbReference>
<dbReference type="Gene3D" id="3.30.70.870">
    <property type="entry name" value="Elongation Factor G (Translational Gtpase), domain 3"/>
    <property type="match status" value="1"/>
</dbReference>
<dbReference type="Gene3D" id="3.40.50.300">
    <property type="entry name" value="P-loop containing nucleotide triphosphate hydrolases"/>
    <property type="match status" value="1"/>
</dbReference>
<dbReference type="Gene3D" id="2.40.30.10">
    <property type="entry name" value="Translation factors"/>
    <property type="match status" value="1"/>
</dbReference>
<dbReference type="HAMAP" id="MF_00054_B">
    <property type="entry name" value="EF_G_EF_2_B"/>
    <property type="match status" value="1"/>
</dbReference>
<dbReference type="InterPro" id="IPR041095">
    <property type="entry name" value="EFG_II"/>
</dbReference>
<dbReference type="InterPro" id="IPR009022">
    <property type="entry name" value="EFG_III"/>
</dbReference>
<dbReference type="InterPro" id="IPR035647">
    <property type="entry name" value="EFG_III/V"/>
</dbReference>
<dbReference type="InterPro" id="IPR047872">
    <property type="entry name" value="EFG_IV"/>
</dbReference>
<dbReference type="InterPro" id="IPR035649">
    <property type="entry name" value="EFG_V"/>
</dbReference>
<dbReference type="InterPro" id="IPR000640">
    <property type="entry name" value="EFG_V-like"/>
</dbReference>
<dbReference type="InterPro" id="IPR004161">
    <property type="entry name" value="EFTu-like_2"/>
</dbReference>
<dbReference type="InterPro" id="IPR031157">
    <property type="entry name" value="G_TR_CS"/>
</dbReference>
<dbReference type="InterPro" id="IPR027417">
    <property type="entry name" value="P-loop_NTPase"/>
</dbReference>
<dbReference type="InterPro" id="IPR020568">
    <property type="entry name" value="Ribosomal_Su5_D2-typ_SF"/>
</dbReference>
<dbReference type="InterPro" id="IPR014721">
    <property type="entry name" value="Ribsml_uS5_D2-typ_fold_subgr"/>
</dbReference>
<dbReference type="InterPro" id="IPR005225">
    <property type="entry name" value="Small_GTP-bd"/>
</dbReference>
<dbReference type="InterPro" id="IPR000795">
    <property type="entry name" value="T_Tr_GTP-bd_dom"/>
</dbReference>
<dbReference type="InterPro" id="IPR009000">
    <property type="entry name" value="Transl_B-barrel_sf"/>
</dbReference>
<dbReference type="InterPro" id="IPR004540">
    <property type="entry name" value="Transl_elong_EFG/EF2"/>
</dbReference>
<dbReference type="InterPro" id="IPR005517">
    <property type="entry name" value="Transl_elong_EFG/EF2_IV"/>
</dbReference>
<dbReference type="NCBIfam" id="TIGR00484">
    <property type="entry name" value="EF-G"/>
    <property type="match status" value="1"/>
</dbReference>
<dbReference type="NCBIfam" id="NF009381">
    <property type="entry name" value="PRK12740.1-5"/>
    <property type="match status" value="1"/>
</dbReference>
<dbReference type="NCBIfam" id="TIGR00231">
    <property type="entry name" value="small_GTP"/>
    <property type="match status" value="1"/>
</dbReference>
<dbReference type="PANTHER" id="PTHR43261:SF1">
    <property type="entry name" value="RIBOSOME-RELEASING FACTOR 2, MITOCHONDRIAL"/>
    <property type="match status" value="1"/>
</dbReference>
<dbReference type="PANTHER" id="PTHR43261">
    <property type="entry name" value="TRANSLATION ELONGATION FACTOR G-RELATED"/>
    <property type="match status" value="1"/>
</dbReference>
<dbReference type="Pfam" id="PF00679">
    <property type="entry name" value="EFG_C"/>
    <property type="match status" value="1"/>
</dbReference>
<dbReference type="Pfam" id="PF14492">
    <property type="entry name" value="EFG_III"/>
    <property type="match status" value="1"/>
</dbReference>
<dbReference type="Pfam" id="PF03764">
    <property type="entry name" value="EFG_IV"/>
    <property type="match status" value="1"/>
</dbReference>
<dbReference type="Pfam" id="PF00009">
    <property type="entry name" value="GTP_EFTU"/>
    <property type="match status" value="1"/>
</dbReference>
<dbReference type="Pfam" id="PF03144">
    <property type="entry name" value="GTP_EFTU_D2"/>
    <property type="match status" value="1"/>
</dbReference>
<dbReference type="PRINTS" id="PR00315">
    <property type="entry name" value="ELONGATNFCT"/>
</dbReference>
<dbReference type="SMART" id="SM00838">
    <property type="entry name" value="EFG_C"/>
    <property type="match status" value="1"/>
</dbReference>
<dbReference type="SMART" id="SM00889">
    <property type="entry name" value="EFG_IV"/>
    <property type="match status" value="1"/>
</dbReference>
<dbReference type="SUPFAM" id="SSF54980">
    <property type="entry name" value="EF-G C-terminal domain-like"/>
    <property type="match status" value="2"/>
</dbReference>
<dbReference type="SUPFAM" id="SSF52540">
    <property type="entry name" value="P-loop containing nucleoside triphosphate hydrolases"/>
    <property type="match status" value="1"/>
</dbReference>
<dbReference type="SUPFAM" id="SSF54211">
    <property type="entry name" value="Ribosomal protein S5 domain 2-like"/>
    <property type="match status" value="1"/>
</dbReference>
<dbReference type="SUPFAM" id="SSF50447">
    <property type="entry name" value="Translation proteins"/>
    <property type="match status" value="1"/>
</dbReference>
<dbReference type="PROSITE" id="PS00301">
    <property type="entry name" value="G_TR_1"/>
    <property type="match status" value="1"/>
</dbReference>
<dbReference type="PROSITE" id="PS51722">
    <property type="entry name" value="G_TR_2"/>
    <property type="match status" value="1"/>
</dbReference>
<name>EFG_BAUCH</name>
<sequence>MARITPIAYYRNIGISAHIDAGKTTTTERILFYTGVNHKIGEVHHGAATMDWMAQEQERGITITSAATTCFWSGMAKQFNAHRINIIDTPGHVDFTIEVERSMRILDGVVMIYCAVGGVQPQSETVWRQANKYKVPRIAFVNKMDRMGANYLRVVEQIRTRLSAKPVPIQLAIGAEENFTGVIDLVKMKAIHWNEADQGISFTYGNIPTEMLDLAEKWHQNLVEIAVEASTELMEKYLNSEIISEEEIKASLRQLVLNNDIILVTCGSAFKNKGVQALLDAVIEYLPAPTDVSIVNRMLTVENKQTKIYDNSLSSDKAPFSALAFKIATDPFVGNLTFFRVYSGMVSSGDMVFNSVKEKRERFGRIVQMHANKREEIKEVHAGDIAAAIGLKDVTTGDTLCDPEAPIILEKMDFPEPVISVAVEPKTKADQEKMGFALNRLAQEDPSFHVWIDEESGETIIAGMGELHLEILIDRMRREFNVLANVGKPQVAYRETIRVTVEQEGKFIRQSGGRGQFGHVWLRIEPMEPGGKTYEFLNEIVGGVIPKEYLPAVDKGIQEQLKSGILAGYPIVDVRVAVFDGSYHEVDSSEMAFKLAASIAFKEGFMKAKPILLEPIMQVEVETPEDYMGDVIGDLNRRRGIINGMIDNTTGKTIRVQVPLSEMFGYATDLRSQTQGRASYTMEFLKYHEVPSHVVQTIIEAHQTK</sequence>
<evidence type="ECO:0000255" key="1">
    <source>
        <dbReference type="HAMAP-Rule" id="MF_00054"/>
    </source>
</evidence>
<feature type="chain" id="PRO_0000263427" description="Elongation factor G">
    <location>
        <begin position="1"/>
        <end position="705"/>
    </location>
</feature>
<feature type="domain" description="tr-type G">
    <location>
        <begin position="8"/>
        <end position="290"/>
    </location>
</feature>
<feature type="binding site" evidence="1">
    <location>
        <begin position="17"/>
        <end position="24"/>
    </location>
    <ligand>
        <name>GTP</name>
        <dbReference type="ChEBI" id="CHEBI:37565"/>
    </ligand>
</feature>
<feature type="binding site" evidence="1">
    <location>
        <begin position="88"/>
        <end position="92"/>
    </location>
    <ligand>
        <name>GTP</name>
        <dbReference type="ChEBI" id="CHEBI:37565"/>
    </ligand>
</feature>
<feature type="binding site" evidence="1">
    <location>
        <begin position="142"/>
        <end position="145"/>
    </location>
    <ligand>
        <name>GTP</name>
        <dbReference type="ChEBI" id="CHEBI:37565"/>
    </ligand>
</feature>
<organism>
    <name type="scientific">Baumannia cicadellinicola subsp. Homalodisca coagulata</name>
    <dbReference type="NCBI Taxonomy" id="374463"/>
    <lineage>
        <taxon>Bacteria</taxon>
        <taxon>Pseudomonadati</taxon>
        <taxon>Pseudomonadota</taxon>
        <taxon>Gammaproteobacteria</taxon>
        <taxon>Candidatus Palibaumannia</taxon>
    </lineage>
</organism>
<protein>
    <recommendedName>
        <fullName evidence="1">Elongation factor G</fullName>
        <shortName evidence="1">EF-G</shortName>
    </recommendedName>
</protein>
<reference key="1">
    <citation type="journal article" date="2006" name="PLoS Biol.">
        <title>Metabolic complementarity and genomics of the dual bacterial symbiosis of sharpshooters.</title>
        <authorList>
            <person name="Wu D."/>
            <person name="Daugherty S.C."/>
            <person name="Van Aken S.E."/>
            <person name="Pai G.H."/>
            <person name="Watkins K.L."/>
            <person name="Khouri H."/>
            <person name="Tallon L.J."/>
            <person name="Zaborsky J.M."/>
            <person name="Dunbar H.E."/>
            <person name="Tran P.L."/>
            <person name="Moran N.A."/>
            <person name="Eisen J.A."/>
        </authorList>
    </citation>
    <scope>NUCLEOTIDE SEQUENCE [LARGE SCALE GENOMIC DNA]</scope>
</reference>
<comment type="function">
    <text evidence="1">Catalyzes the GTP-dependent ribosomal translocation step during translation elongation. During this step, the ribosome changes from the pre-translocational (PRE) to the post-translocational (POST) state as the newly formed A-site-bound peptidyl-tRNA and P-site-bound deacylated tRNA move to the P and E sites, respectively. Catalyzes the coordinated movement of the two tRNA molecules, the mRNA and conformational changes in the ribosome.</text>
</comment>
<comment type="subcellular location">
    <subcellularLocation>
        <location evidence="1">Cytoplasm</location>
    </subcellularLocation>
</comment>
<comment type="similarity">
    <text evidence="1">Belongs to the TRAFAC class translation factor GTPase superfamily. Classic translation factor GTPase family. EF-G/EF-2 subfamily.</text>
</comment>